<proteinExistence type="inferred from homology"/>
<organism>
    <name type="scientific">Clavibacter sepedonicus</name>
    <name type="common">Clavibacter michiganensis subsp. sepedonicus</name>
    <dbReference type="NCBI Taxonomy" id="31964"/>
    <lineage>
        <taxon>Bacteria</taxon>
        <taxon>Bacillati</taxon>
        <taxon>Actinomycetota</taxon>
        <taxon>Actinomycetes</taxon>
        <taxon>Micrococcales</taxon>
        <taxon>Microbacteriaceae</taxon>
        <taxon>Clavibacter</taxon>
    </lineage>
</organism>
<feature type="chain" id="PRO_1000077148" description="ATP-dependent Clp protease ATP-binding subunit ClpX">
    <location>
        <begin position="1"/>
        <end position="426"/>
    </location>
</feature>
<feature type="domain" description="ClpX-type ZB" evidence="2">
    <location>
        <begin position="1"/>
        <end position="54"/>
    </location>
</feature>
<feature type="binding site" evidence="2">
    <location>
        <position position="13"/>
    </location>
    <ligand>
        <name>Zn(2+)</name>
        <dbReference type="ChEBI" id="CHEBI:29105"/>
    </ligand>
</feature>
<feature type="binding site" evidence="2">
    <location>
        <position position="16"/>
    </location>
    <ligand>
        <name>Zn(2+)</name>
        <dbReference type="ChEBI" id="CHEBI:29105"/>
    </ligand>
</feature>
<feature type="binding site" evidence="2">
    <location>
        <position position="35"/>
    </location>
    <ligand>
        <name>Zn(2+)</name>
        <dbReference type="ChEBI" id="CHEBI:29105"/>
    </ligand>
</feature>
<feature type="binding site" evidence="2">
    <location>
        <position position="38"/>
    </location>
    <ligand>
        <name>Zn(2+)</name>
        <dbReference type="ChEBI" id="CHEBI:29105"/>
    </ligand>
</feature>
<feature type="binding site" evidence="1">
    <location>
        <begin position="126"/>
        <end position="133"/>
    </location>
    <ligand>
        <name>ATP</name>
        <dbReference type="ChEBI" id="CHEBI:30616"/>
    </ligand>
</feature>
<dbReference type="EMBL" id="AM849034">
    <property type="protein sequence ID" value="CAQ01612.1"/>
    <property type="molecule type" value="Genomic_DNA"/>
</dbReference>
<dbReference type="RefSeq" id="WP_012298876.1">
    <property type="nucleotide sequence ID" value="NZ_MZMN01000003.1"/>
</dbReference>
<dbReference type="SMR" id="B0RAS4"/>
<dbReference type="STRING" id="31964.CMS1501"/>
<dbReference type="KEGG" id="cms:CMS1501"/>
<dbReference type="eggNOG" id="COG1219">
    <property type="taxonomic scope" value="Bacteria"/>
</dbReference>
<dbReference type="HOGENOM" id="CLU_014218_8_2_11"/>
<dbReference type="OrthoDB" id="9804062at2"/>
<dbReference type="Proteomes" id="UP000001318">
    <property type="component" value="Chromosome"/>
</dbReference>
<dbReference type="GO" id="GO:0009376">
    <property type="term" value="C:HslUV protease complex"/>
    <property type="evidence" value="ECO:0007669"/>
    <property type="project" value="TreeGrafter"/>
</dbReference>
<dbReference type="GO" id="GO:0005524">
    <property type="term" value="F:ATP binding"/>
    <property type="evidence" value="ECO:0007669"/>
    <property type="project" value="UniProtKB-UniRule"/>
</dbReference>
<dbReference type="GO" id="GO:0016887">
    <property type="term" value="F:ATP hydrolysis activity"/>
    <property type="evidence" value="ECO:0007669"/>
    <property type="project" value="InterPro"/>
</dbReference>
<dbReference type="GO" id="GO:0140662">
    <property type="term" value="F:ATP-dependent protein folding chaperone"/>
    <property type="evidence" value="ECO:0007669"/>
    <property type="project" value="InterPro"/>
</dbReference>
<dbReference type="GO" id="GO:0046983">
    <property type="term" value="F:protein dimerization activity"/>
    <property type="evidence" value="ECO:0007669"/>
    <property type="project" value="InterPro"/>
</dbReference>
<dbReference type="GO" id="GO:0051082">
    <property type="term" value="F:unfolded protein binding"/>
    <property type="evidence" value="ECO:0007669"/>
    <property type="project" value="UniProtKB-UniRule"/>
</dbReference>
<dbReference type="GO" id="GO:0008270">
    <property type="term" value="F:zinc ion binding"/>
    <property type="evidence" value="ECO:0007669"/>
    <property type="project" value="InterPro"/>
</dbReference>
<dbReference type="GO" id="GO:0051301">
    <property type="term" value="P:cell division"/>
    <property type="evidence" value="ECO:0007669"/>
    <property type="project" value="TreeGrafter"/>
</dbReference>
<dbReference type="GO" id="GO:0051603">
    <property type="term" value="P:proteolysis involved in protein catabolic process"/>
    <property type="evidence" value="ECO:0007669"/>
    <property type="project" value="TreeGrafter"/>
</dbReference>
<dbReference type="CDD" id="cd19497">
    <property type="entry name" value="RecA-like_ClpX"/>
    <property type="match status" value="1"/>
</dbReference>
<dbReference type="FunFam" id="1.10.8.60:FF:000002">
    <property type="entry name" value="ATP-dependent Clp protease ATP-binding subunit ClpX"/>
    <property type="match status" value="1"/>
</dbReference>
<dbReference type="FunFam" id="3.40.50.300:FF:000005">
    <property type="entry name" value="ATP-dependent Clp protease ATP-binding subunit ClpX"/>
    <property type="match status" value="1"/>
</dbReference>
<dbReference type="Gene3D" id="1.10.8.60">
    <property type="match status" value="1"/>
</dbReference>
<dbReference type="Gene3D" id="6.20.220.10">
    <property type="entry name" value="ClpX chaperone, C4-type zinc finger domain"/>
    <property type="match status" value="1"/>
</dbReference>
<dbReference type="Gene3D" id="3.40.50.300">
    <property type="entry name" value="P-loop containing nucleotide triphosphate hydrolases"/>
    <property type="match status" value="1"/>
</dbReference>
<dbReference type="HAMAP" id="MF_00175">
    <property type="entry name" value="ClpX"/>
    <property type="match status" value="1"/>
</dbReference>
<dbReference type="InterPro" id="IPR003593">
    <property type="entry name" value="AAA+_ATPase"/>
</dbReference>
<dbReference type="InterPro" id="IPR050052">
    <property type="entry name" value="ATP-dep_Clp_protease_ClpX"/>
</dbReference>
<dbReference type="InterPro" id="IPR003959">
    <property type="entry name" value="ATPase_AAA_core"/>
</dbReference>
<dbReference type="InterPro" id="IPR019489">
    <property type="entry name" value="Clp_ATPase_C"/>
</dbReference>
<dbReference type="InterPro" id="IPR004487">
    <property type="entry name" value="Clp_protease_ATP-bd_su_ClpX"/>
</dbReference>
<dbReference type="InterPro" id="IPR046425">
    <property type="entry name" value="ClpX_bact"/>
</dbReference>
<dbReference type="InterPro" id="IPR027417">
    <property type="entry name" value="P-loop_NTPase"/>
</dbReference>
<dbReference type="InterPro" id="IPR010603">
    <property type="entry name" value="Znf_CppX_C4"/>
</dbReference>
<dbReference type="InterPro" id="IPR038366">
    <property type="entry name" value="Znf_CppX_C4_sf"/>
</dbReference>
<dbReference type="NCBIfam" id="TIGR00382">
    <property type="entry name" value="clpX"/>
    <property type="match status" value="1"/>
</dbReference>
<dbReference type="NCBIfam" id="NF003745">
    <property type="entry name" value="PRK05342.1"/>
    <property type="match status" value="1"/>
</dbReference>
<dbReference type="PANTHER" id="PTHR48102:SF7">
    <property type="entry name" value="ATP-DEPENDENT CLP PROTEASE ATP-BINDING SUBUNIT CLPX-LIKE, MITOCHONDRIAL"/>
    <property type="match status" value="1"/>
</dbReference>
<dbReference type="PANTHER" id="PTHR48102">
    <property type="entry name" value="ATP-DEPENDENT CLP PROTEASE ATP-BINDING SUBUNIT CLPX-LIKE, MITOCHONDRIAL-RELATED"/>
    <property type="match status" value="1"/>
</dbReference>
<dbReference type="Pfam" id="PF07724">
    <property type="entry name" value="AAA_2"/>
    <property type="match status" value="1"/>
</dbReference>
<dbReference type="Pfam" id="PF10431">
    <property type="entry name" value="ClpB_D2-small"/>
    <property type="match status" value="1"/>
</dbReference>
<dbReference type="Pfam" id="PF06689">
    <property type="entry name" value="zf-C4_ClpX"/>
    <property type="match status" value="1"/>
</dbReference>
<dbReference type="SMART" id="SM00382">
    <property type="entry name" value="AAA"/>
    <property type="match status" value="1"/>
</dbReference>
<dbReference type="SMART" id="SM01086">
    <property type="entry name" value="ClpB_D2-small"/>
    <property type="match status" value="1"/>
</dbReference>
<dbReference type="SMART" id="SM00994">
    <property type="entry name" value="zf-C4_ClpX"/>
    <property type="match status" value="1"/>
</dbReference>
<dbReference type="SUPFAM" id="SSF57716">
    <property type="entry name" value="Glucocorticoid receptor-like (DNA-binding domain)"/>
    <property type="match status" value="1"/>
</dbReference>
<dbReference type="SUPFAM" id="SSF52540">
    <property type="entry name" value="P-loop containing nucleoside triphosphate hydrolases"/>
    <property type="match status" value="1"/>
</dbReference>
<dbReference type="PROSITE" id="PS51902">
    <property type="entry name" value="CLPX_ZB"/>
    <property type="match status" value="1"/>
</dbReference>
<keyword id="KW-0067">ATP-binding</keyword>
<keyword id="KW-0143">Chaperone</keyword>
<keyword id="KW-0479">Metal-binding</keyword>
<keyword id="KW-0547">Nucleotide-binding</keyword>
<keyword id="KW-0862">Zinc</keyword>
<comment type="function">
    <text evidence="1">ATP-dependent specificity component of the Clp protease. It directs the protease to specific substrates. Can perform chaperone functions in the absence of ClpP.</text>
</comment>
<comment type="subunit">
    <text evidence="1">Component of the ClpX-ClpP complex. Forms a hexameric ring that, in the presence of ATP, binds to fourteen ClpP subunits assembled into a disk-like structure with a central cavity, resembling the structure of eukaryotic proteasomes.</text>
</comment>
<comment type="similarity">
    <text evidence="1">Belongs to the ClpX chaperone family.</text>
</comment>
<accession>B0RAS4</accession>
<gene>
    <name evidence="1" type="primary">clpX</name>
    <name type="ordered locus">CMS1501</name>
</gene>
<reference key="1">
    <citation type="journal article" date="2008" name="J. Bacteriol.">
        <title>Genome of the actinomycete plant pathogen Clavibacter michiganensis subsp. sepedonicus suggests recent niche adaptation.</title>
        <authorList>
            <person name="Bentley S.D."/>
            <person name="Corton C."/>
            <person name="Brown S.E."/>
            <person name="Barron A."/>
            <person name="Clark L."/>
            <person name="Doggett J."/>
            <person name="Harris B."/>
            <person name="Ormond D."/>
            <person name="Quail M.A."/>
            <person name="May G."/>
            <person name="Francis D."/>
            <person name="Knudson D."/>
            <person name="Parkhill J."/>
            <person name="Ishimaru C.A."/>
        </authorList>
    </citation>
    <scope>NUCLEOTIDE SEQUENCE [LARGE SCALE GENOMIC DNA]</scope>
    <source>
        <strain>ATCC 33113 / DSM 20744 / JCM 9667 / LMG 2889 / ICMP 2535 / C-1</strain>
    </source>
</reference>
<evidence type="ECO:0000255" key="1">
    <source>
        <dbReference type="HAMAP-Rule" id="MF_00175"/>
    </source>
</evidence>
<evidence type="ECO:0000255" key="2">
    <source>
        <dbReference type="PROSITE-ProRule" id="PRU01250"/>
    </source>
</evidence>
<sequence>MARIGESADLLKCSFCGKSQKQVQQLIAGPGVYICDECVELCNEIIEERLAEASEETTGEFDLPKPKEIFGFLDEYVIGQEAAKRALSVAVYNHYKRVRAVSTIGPAKTVGDEIEIAKSNILLIGPTGCGKTYLAQTLAKRLNVPFAVADATALTEAGYVGEDVENILLKLIQAADYDVKRAETGIIYIDEVDKIARKAENPSITRDVSGEGVQQALLKILEGTVASVPPQGGRKHPHQEFIQVDTTNVLFIVAGAFAGLEDIISQRAGKKGIGFGAPLHRKDLNADVFGEVLPEDLHKFGLIPEFIGRLPVVTTVTQLDQRALMEILTKPRNALVRQYQRMFELDGVELEFEQGALESIADLAVLRQTGARGLRAILEEVLGPIMFDIPSDDEVGRVVITRESVVQNAAPTIVPRASMLRAEKSA</sequence>
<protein>
    <recommendedName>
        <fullName evidence="1">ATP-dependent Clp protease ATP-binding subunit ClpX</fullName>
    </recommendedName>
</protein>
<name>CLPX_CLASE</name>